<feature type="chain" id="PRO_0000051105" description="Nucleolar protein 10">
    <location>
        <begin position="1"/>
        <end position="689"/>
    </location>
</feature>
<feature type="repeat" description="WD 1">
    <location>
        <begin position="50"/>
        <end position="90"/>
    </location>
</feature>
<feature type="repeat" description="WD 2">
    <location>
        <begin position="174"/>
        <end position="213"/>
    </location>
</feature>
<feature type="repeat" description="WD 3">
    <location>
        <begin position="228"/>
        <end position="266"/>
    </location>
</feature>
<feature type="repeat" description="WD 4">
    <location>
        <begin position="270"/>
        <end position="308"/>
    </location>
</feature>
<feature type="repeat" description="WD 5">
    <location>
        <begin position="310"/>
        <end position="349"/>
    </location>
</feature>
<feature type="region of interest" description="Disordered" evidence="3">
    <location>
        <begin position="529"/>
        <end position="592"/>
    </location>
</feature>
<feature type="region of interest" description="Disordered" evidence="3">
    <location>
        <begin position="646"/>
        <end position="689"/>
    </location>
</feature>
<feature type="coiled-coil region" evidence="2">
    <location>
        <begin position="422"/>
        <end position="476"/>
    </location>
</feature>
<feature type="coiled-coil region" evidence="2">
    <location>
        <begin position="511"/>
        <end position="590"/>
    </location>
</feature>
<feature type="coiled-coil region" evidence="2">
    <location>
        <begin position="647"/>
        <end position="679"/>
    </location>
</feature>
<feature type="compositionally biased region" description="Basic and acidic residues" evidence="3">
    <location>
        <begin position="554"/>
        <end position="585"/>
    </location>
</feature>
<feature type="compositionally biased region" description="Basic and acidic residues" evidence="3">
    <location>
        <begin position="658"/>
        <end position="669"/>
    </location>
</feature>
<feature type="compositionally biased region" description="Basic residues" evidence="3">
    <location>
        <begin position="670"/>
        <end position="689"/>
    </location>
</feature>
<feature type="sequence conflict" description="In Ref. 1; AAH43816." evidence="4" ref="1">
    <original>S</original>
    <variation>F</variation>
    <location>
        <position position="292"/>
    </location>
</feature>
<name>NOL10_XENLA</name>
<sequence length="689" mass="80449">MQVSNVNDVKIYNLSCGKSLPEWLSDRKKRALQKKDVDVRRRIELIQDFEMPTVSTNIKVSRDGQYIMAAGTYKPRIRCYDTYQLSLKFERCLDSEVIKFDILSEDYSKIVFLQSDRYVELHSQHGRYYRLRIPKFGRDFAYHYPSCDLYFVGASSEVYRLNLEQGRYLNSLQTEASQINVCDINPTHHLFAAGTTEGRVECWDPRTRSRVGLLDCALSSVTADMEVEGLPSVSALKFNGPLHMAVGTSTGQVLLYDLRSNRPVIVKDHQYGLPIKSIQFHSALDLVISADSRIIKMWNKDNGKIFTSIEPEADVNDVCLYPNSGMLFTANEAPKMNVYYIPALGPAPRWCSFLDNLTEELEENPENTVYDDYKFVTRKELDELGLSHLIGSPMLRAYMHGFFMDIRLYHKVKAMVNPFAYEEYKKEKIRQKIEETRAQRVQIKKLPKVNKELALKLYEDEEEEKQLSKKKKKQKKMPNILTDDRFKVMFENPDFQVDQESEEYRLLNPLVSKISEKRKKKLKILEKLEAEGEEEEEEPEGKPSDAESSETSDDEKGWVEEVRKQRKLLRQEEKERRQERVREDQQTALKPQFYEIKAGEEFRSFQDAAKKQKLMRKTLEDRIKVEEKLGTLNVADTAVGSKQLTFTLKKSEQHRKRQEAEKQHQEERKKLRRSAGHLKSKQAKGRPFY</sequence>
<organism>
    <name type="scientific">Xenopus laevis</name>
    <name type="common">African clawed frog</name>
    <dbReference type="NCBI Taxonomy" id="8355"/>
    <lineage>
        <taxon>Eukaryota</taxon>
        <taxon>Metazoa</taxon>
        <taxon>Chordata</taxon>
        <taxon>Craniata</taxon>
        <taxon>Vertebrata</taxon>
        <taxon>Euteleostomi</taxon>
        <taxon>Amphibia</taxon>
        <taxon>Batrachia</taxon>
        <taxon>Anura</taxon>
        <taxon>Pipoidea</taxon>
        <taxon>Pipidae</taxon>
        <taxon>Xenopodinae</taxon>
        <taxon>Xenopus</taxon>
        <taxon>Xenopus</taxon>
    </lineage>
</organism>
<evidence type="ECO:0000250" key="1"/>
<evidence type="ECO:0000255" key="2"/>
<evidence type="ECO:0000256" key="3">
    <source>
        <dbReference type="SAM" id="MobiDB-lite"/>
    </source>
</evidence>
<evidence type="ECO:0000305" key="4"/>
<reference key="1">
    <citation type="submission" date="2003-08" db="EMBL/GenBank/DDBJ databases">
        <authorList>
            <consortium name="NIH - Xenopus Gene Collection (XGC) project"/>
        </authorList>
    </citation>
    <scope>NUCLEOTIDE SEQUENCE [LARGE SCALE MRNA]</scope>
    <source>
        <tissue>Embryo</tissue>
        <tissue>Ovary</tissue>
    </source>
</reference>
<protein>
    <recommendedName>
        <fullName>Nucleolar protein 10</fullName>
    </recommendedName>
</protein>
<keyword id="KW-0175">Coiled coil</keyword>
<keyword id="KW-0539">Nucleus</keyword>
<keyword id="KW-1185">Reference proteome</keyword>
<keyword id="KW-0677">Repeat</keyword>
<keyword id="KW-0853">WD repeat</keyword>
<comment type="subcellular location">
    <subcellularLocation>
        <location evidence="1">Nucleus</location>
        <location evidence="1">Nucleolus</location>
    </subcellularLocation>
</comment>
<comment type="similarity">
    <text evidence="4">Belongs to the WD repeat NOL10/ENP2 family.</text>
</comment>
<comment type="sequence caution" evidence="4">
    <conflict type="miscellaneous discrepancy">
        <sequence resource="EMBL-CDS" id="AAH43816"/>
    </conflict>
    <text>Contaminating sequence. Potential poly-A sequence.</text>
</comment>
<gene>
    <name type="primary">nol10</name>
</gene>
<proteinExistence type="evidence at transcript level"/>
<accession>Q7T0Q5</accession>
<accession>Q7ZYE7</accession>
<dbReference type="EMBL" id="BC043816">
    <property type="protein sequence ID" value="AAH43816.1"/>
    <property type="status" value="ALT_SEQ"/>
    <property type="molecule type" value="mRNA"/>
</dbReference>
<dbReference type="EMBL" id="BC056086">
    <property type="protein sequence ID" value="AAH56086.1"/>
    <property type="molecule type" value="mRNA"/>
</dbReference>
<dbReference type="RefSeq" id="NP_001082737.1">
    <property type="nucleotide sequence ID" value="NM_001089268.1"/>
</dbReference>
<dbReference type="SMR" id="Q7T0Q5"/>
<dbReference type="DNASU" id="398690"/>
<dbReference type="GeneID" id="398690"/>
<dbReference type="KEGG" id="xla:398690"/>
<dbReference type="AGR" id="Xenbase:XB-GENE-5800096"/>
<dbReference type="CTD" id="398690"/>
<dbReference type="Xenbase" id="XB-GENE-5800096">
    <property type="gene designation" value="nol10.L"/>
</dbReference>
<dbReference type="OMA" id="GYFMDVR"/>
<dbReference type="OrthoDB" id="273340at2759"/>
<dbReference type="Proteomes" id="UP000186698">
    <property type="component" value="Chromosome 5L"/>
</dbReference>
<dbReference type="Bgee" id="398690">
    <property type="expression patterns" value="Expressed in neurula embryo and 19 other cell types or tissues"/>
</dbReference>
<dbReference type="GO" id="GO:0030686">
    <property type="term" value="C:90S preribosome"/>
    <property type="evidence" value="ECO:0007669"/>
    <property type="project" value="TreeGrafter"/>
</dbReference>
<dbReference type="GO" id="GO:0005730">
    <property type="term" value="C:nucleolus"/>
    <property type="evidence" value="ECO:0000318"/>
    <property type="project" value="GO_Central"/>
</dbReference>
<dbReference type="GO" id="GO:0032040">
    <property type="term" value="C:small-subunit processome"/>
    <property type="evidence" value="ECO:0000318"/>
    <property type="project" value="GO_Central"/>
</dbReference>
<dbReference type="GO" id="GO:0000462">
    <property type="term" value="P:maturation of SSU-rRNA from tricistronic rRNA transcript (SSU-rRNA, 5.8S rRNA, LSU-rRNA)"/>
    <property type="evidence" value="ECO:0000318"/>
    <property type="project" value="GO_Central"/>
</dbReference>
<dbReference type="FunFam" id="2.130.10.10:FF:000601">
    <property type="entry name" value="Nucleolar protein 10"/>
    <property type="match status" value="1"/>
</dbReference>
<dbReference type="FunFam" id="2.130.10.10:FF:000980">
    <property type="entry name" value="Nucleolar protein 10"/>
    <property type="match status" value="1"/>
</dbReference>
<dbReference type="Gene3D" id="2.130.10.10">
    <property type="entry name" value="YVTN repeat-like/Quinoprotein amine dehydrogenase"/>
    <property type="match status" value="2"/>
</dbReference>
<dbReference type="InterPro" id="IPR056551">
    <property type="entry name" value="Beta-prop_NOL10_N"/>
</dbReference>
<dbReference type="InterPro" id="IPR040382">
    <property type="entry name" value="NOL10/Enp2"/>
</dbReference>
<dbReference type="InterPro" id="IPR056550">
    <property type="entry name" value="NOL10_2nd"/>
</dbReference>
<dbReference type="InterPro" id="IPR012580">
    <property type="entry name" value="NUC153"/>
</dbReference>
<dbReference type="InterPro" id="IPR015943">
    <property type="entry name" value="WD40/YVTN_repeat-like_dom_sf"/>
</dbReference>
<dbReference type="InterPro" id="IPR036322">
    <property type="entry name" value="WD40_repeat_dom_sf"/>
</dbReference>
<dbReference type="InterPro" id="IPR001680">
    <property type="entry name" value="WD40_rpt"/>
</dbReference>
<dbReference type="PANTHER" id="PTHR14927">
    <property type="entry name" value="NUCLEOLAR PROTEIN 10"/>
    <property type="match status" value="1"/>
</dbReference>
<dbReference type="PANTHER" id="PTHR14927:SF0">
    <property type="entry name" value="NUCLEOLAR PROTEIN 10"/>
    <property type="match status" value="1"/>
</dbReference>
<dbReference type="Pfam" id="PF23098">
    <property type="entry name" value="Beta-prop_NOL10_N"/>
    <property type="match status" value="1"/>
</dbReference>
<dbReference type="Pfam" id="PF23097">
    <property type="entry name" value="NOL10_2nd"/>
    <property type="match status" value="1"/>
</dbReference>
<dbReference type="Pfam" id="PF08159">
    <property type="entry name" value="NUC153"/>
    <property type="match status" value="1"/>
</dbReference>
<dbReference type="SMART" id="SM00320">
    <property type="entry name" value="WD40"/>
    <property type="match status" value="4"/>
</dbReference>
<dbReference type="SUPFAM" id="SSF50978">
    <property type="entry name" value="WD40 repeat-like"/>
    <property type="match status" value="1"/>
</dbReference>